<proteinExistence type="inferred from homology"/>
<keyword id="KW-0067">ATP-binding</keyword>
<keyword id="KW-0418">Kinase</keyword>
<keyword id="KW-0441">Lipid A biosynthesis</keyword>
<keyword id="KW-0444">Lipid biosynthesis</keyword>
<keyword id="KW-0443">Lipid metabolism</keyword>
<keyword id="KW-0547">Nucleotide-binding</keyword>
<keyword id="KW-1185">Reference proteome</keyword>
<keyword id="KW-0808">Transferase</keyword>
<name>LPXK_CHLTR</name>
<dbReference type="EC" id="2.7.1.130" evidence="1"/>
<dbReference type="EMBL" id="AE001273">
    <property type="protein sequence ID" value="AAC67999.1"/>
    <property type="status" value="ALT_INIT"/>
    <property type="molecule type" value="Genomic_DNA"/>
</dbReference>
<dbReference type="PIR" id="E71519">
    <property type="entry name" value="E71519"/>
</dbReference>
<dbReference type="RefSeq" id="NP_219912.1">
    <property type="nucleotide sequence ID" value="NC_000117.1"/>
</dbReference>
<dbReference type="RefSeq" id="WP_010725185.1">
    <property type="nucleotide sequence ID" value="NC_000117.1"/>
</dbReference>
<dbReference type="SMR" id="O84407"/>
<dbReference type="STRING" id="272561.CT_402"/>
<dbReference type="EnsemblBacteria" id="AAC67999">
    <property type="protein sequence ID" value="AAC67999"/>
    <property type="gene ID" value="CT_402"/>
</dbReference>
<dbReference type="GeneID" id="884715"/>
<dbReference type="KEGG" id="ctr:CT_402"/>
<dbReference type="PATRIC" id="fig|272561.5.peg.433"/>
<dbReference type="HOGENOM" id="CLU_038816_6_0_0"/>
<dbReference type="InParanoid" id="O84407"/>
<dbReference type="OrthoDB" id="9789797at2"/>
<dbReference type="UniPathway" id="UPA00359">
    <property type="reaction ID" value="UER00482"/>
</dbReference>
<dbReference type="Proteomes" id="UP000000431">
    <property type="component" value="Chromosome"/>
</dbReference>
<dbReference type="GO" id="GO:0005886">
    <property type="term" value="C:plasma membrane"/>
    <property type="evidence" value="ECO:0000318"/>
    <property type="project" value="GO_Central"/>
</dbReference>
<dbReference type="GO" id="GO:0005524">
    <property type="term" value="F:ATP binding"/>
    <property type="evidence" value="ECO:0007669"/>
    <property type="project" value="UniProtKB-UniRule"/>
</dbReference>
<dbReference type="GO" id="GO:0009029">
    <property type="term" value="F:tetraacyldisaccharide 4'-kinase activity"/>
    <property type="evidence" value="ECO:0000318"/>
    <property type="project" value="GO_Central"/>
</dbReference>
<dbReference type="GO" id="GO:0009245">
    <property type="term" value="P:lipid A biosynthetic process"/>
    <property type="evidence" value="ECO:0000318"/>
    <property type="project" value="GO_Central"/>
</dbReference>
<dbReference type="GO" id="GO:0009244">
    <property type="term" value="P:lipopolysaccharide core region biosynthetic process"/>
    <property type="evidence" value="ECO:0000318"/>
    <property type="project" value="GO_Central"/>
</dbReference>
<dbReference type="HAMAP" id="MF_00409">
    <property type="entry name" value="LpxK"/>
    <property type="match status" value="1"/>
</dbReference>
<dbReference type="InterPro" id="IPR003758">
    <property type="entry name" value="LpxK"/>
</dbReference>
<dbReference type="InterPro" id="IPR027417">
    <property type="entry name" value="P-loop_NTPase"/>
</dbReference>
<dbReference type="NCBIfam" id="TIGR00682">
    <property type="entry name" value="lpxK"/>
    <property type="match status" value="1"/>
</dbReference>
<dbReference type="PANTHER" id="PTHR42724">
    <property type="entry name" value="TETRAACYLDISACCHARIDE 4'-KINASE"/>
    <property type="match status" value="1"/>
</dbReference>
<dbReference type="PANTHER" id="PTHR42724:SF1">
    <property type="entry name" value="TETRAACYLDISACCHARIDE 4'-KINASE, MITOCHONDRIAL-RELATED"/>
    <property type="match status" value="1"/>
</dbReference>
<dbReference type="Pfam" id="PF02606">
    <property type="entry name" value="LpxK"/>
    <property type="match status" value="1"/>
</dbReference>
<dbReference type="SUPFAM" id="SSF52540">
    <property type="entry name" value="P-loop containing nucleoside triphosphate hydrolases"/>
    <property type="match status" value="1"/>
</dbReference>
<evidence type="ECO:0000255" key="1">
    <source>
        <dbReference type="HAMAP-Rule" id="MF_00409"/>
    </source>
</evidence>
<evidence type="ECO:0000305" key="2"/>
<protein>
    <recommendedName>
        <fullName evidence="1">Tetraacyldisaccharide 4'-kinase</fullName>
        <ecNumber evidence="1">2.7.1.130</ecNumber>
    </recommendedName>
    <alternativeName>
        <fullName evidence="1">Lipid A 4'-kinase</fullName>
    </alternativeName>
</protein>
<organism>
    <name type="scientific">Chlamydia trachomatis serovar D (strain ATCC VR-885 / DSM 19411 / UW-3/Cx)</name>
    <dbReference type="NCBI Taxonomy" id="272561"/>
    <lineage>
        <taxon>Bacteria</taxon>
        <taxon>Pseudomonadati</taxon>
        <taxon>Chlamydiota</taxon>
        <taxon>Chlamydiia</taxon>
        <taxon>Chlamydiales</taxon>
        <taxon>Chlamydiaceae</taxon>
        <taxon>Chlamydia/Chlamydophila group</taxon>
        <taxon>Chlamydia</taxon>
    </lineage>
</organism>
<feature type="chain" id="PRO_0000190921" description="Tetraacyldisaccharide 4'-kinase">
    <location>
        <begin position="1"/>
        <end position="369"/>
    </location>
</feature>
<feature type="binding site" evidence="1">
    <location>
        <begin position="68"/>
        <end position="75"/>
    </location>
    <ligand>
        <name>ATP</name>
        <dbReference type="ChEBI" id="CHEBI:30616"/>
    </ligand>
</feature>
<accession>O84407</accession>
<comment type="function">
    <text evidence="1">Transfers the gamma-phosphate of ATP to the 4'-position of a tetraacyldisaccharide 1-phosphate intermediate (termed DS-1-P) to form tetraacyldisaccharide 1,4'-bis-phosphate (lipid IVA).</text>
</comment>
<comment type="catalytic activity">
    <reaction evidence="1">
        <text>a lipid A disaccharide + ATP = a lipid IVA + ADP + H(+)</text>
        <dbReference type="Rhea" id="RHEA:67840"/>
        <dbReference type="ChEBI" id="CHEBI:15378"/>
        <dbReference type="ChEBI" id="CHEBI:30616"/>
        <dbReference type="ChEBI" id="CHEBI:176343"/>
        <dbReference type="ChEBI" id="CHEBI:176425"/>
        <dbReference type="ChEBI" id="CHEBI:456216"/>
        <dbReference type="EC" id="2.7.1.130"/>
    </reaction>
</comment>
<comment type="pathway">
    <text evidence="1">Glycolipid biosynthesis; lipid IV(A) biosynthesis; lipid IV(A) from (3R)-3-hydroxytetradecanoyl-[acyl-carrier-protein] and UDP-N-acetyl-alpha-D-glucosamine: step 6/6.</text>
</comment>
<comment type="similarity">
    <text evidence="1">Belongs to the LpxK family.</text>
</comment>
<comment type="sequence caution" evidence="2">
    <conflict type="erroneous initiation">
        <sequence resource="EMBL-CDS" id="AAC67999"/>
    </conflict>
</comment>
<gene>
    <name evidence="1" type="primary">lpxK</name>
    <name type="ordered locus">CT_402</name>
</gene>
<reference key="1">
    <citation type="journal article" date="1998" name="Science">
        <title>Genome sequence of an obligate intracellular pathogen of humans: Chlamydia trachomatis.</title>
        <authorList>
            <person name="Stephens R.S."/>
            <person name="Kalman S."/>
            <person name="Lammel C.J."/>
            <person name="Fan J."/>
            <person name="Marathe R."/>
            <person name="Aravind L."/>
            <person name="Mitchell W.P."/>
            <person name="Olinger L."/>
            <person name="Tatusov R.L."/>
            <person name="Zhao Q."/>
            <person name="Koonin E.V."/>
            <person name="Davis R.W."/>
        </authorList>
    </citation>
    <scope>NUCLEOTIDE SEQUENCE [LARGE SCALE GENOMIC DNA]</scope>
    <source>
        <strain>ATCC VR-885 / DSM 19411 / UW-3/Cx</strain>
    </source>
</reference>
<sequence>MRFSFFSGIRDLFRHLIISATSGALSDRLGWLWAVIARVFSGSVWLRHKIAKSPHQVQATVVSVGNIVVGGTGKTPLVLWLAQALHERGLSCAVLSRGYKGKYSKKKAFTIVNPALHTASCVGDEPLLLAKYLPSGTVRIQKDRKTLAEKSAGDFDVLLLDDGFQYNRLHKDVEIVLVNGSDPFGGGSFFPKGRLRDFPERLAKADYVMINGRCSPSDQRELDRLHPEEKIVIEPQISEIVWLNQSVNMPRDHWEGLGVGVFCGLGFPKGFLAMLRDAGIHVLGTYLLPDHVGITKQELELFCKKIILRQGVGILCTEKDSVKIGALAEEISFPVGEVRMRFSCVCNERRMVAMLDAIEAIQKNKRVTT</sequence>